<proteinExistence type="inferred from homology"/>
<reference key="1">
    <citation type="journal article" date="2004" name="Nat. Biotechnol.">
        <title>The genome sequence of the capnophilic rumen bacterium Mannheimia succiniciproducens.</title>
        <authorList>
            <person name="Hong S.H."/>
            <person name="Kim J.S."/>
            <person name="Lee S.Y."/>
            <person name="In Y.H."/>
            <person name="Choi S.S."/>
            <person name="Rih J.-K."/>
            <person name="Kim C.H."/>
            <person name="Jeong H."/>
            <person name="Hur C.G."/>
            <person name="Kim J.J."/>
        </authorList>
    </citation>
    <scope>NUCLEOTIDE SEQUENCE [LARGE SCALE GENOMIC DNA]</scope>
    <source>
        <strain>KCTC 0769BP / MBEL55E</strain>
    </source>
</reference>
<comment type="function">
    <text evidence="1">Catalyzes the transfer of a ribosyl phosphate group from 5-phosphoribose 1-diphosphate to orotate, leading to the formation of orotidine monophosphate (OMP).</text>
</comment>
<comment type="catalytic activity">
    <reaction evidence="1">
        <text>orotidine 5'-phosphate + diphosphate = orotate + 5-phospho-alpha-D-ribose 1-diphosphate</text>
        <dbReference type="Rhea" id="RHEA:10380"/>
        <dbReference type="ChEBI" id="CHEBI:30839"/>
        <dbReference type="ChEBI" id="CHEBI:33019"/>
        <dbReference type="ChEBI" id="CHEBI:57538"/>
        <dbReference type="ChEBI" id="CHEBI:58017"/>
        <dbReference type="EC" id="2.4.2.10"/>
    </reaction>
</comment>
<comment type="cofactor">
    <cofactor evidence="1">
        <name>Mg(2+)</name>
        <dbReference type="ChEBI" id="CHEBI:18420"/>
    </cofactor>
</comment>
<comment type="pathway">
    <text evidence="1">Pyrimidine metabolism; UMP biosynthesis via de novo pathway; UMP from orotate: step 1/2.</text>
</comment>
<comment type="subunit">
    <text evidence="1">Homodimer.</text>
</comment>
<comment type="similarity">
    <text evidence="1">Belongs to the purine/pyrimidine phosphoribosyltransferase family. PyrE subfamily.</text>
</comment>
<gene>
    <name evidence="1" type="primary">pyrE</name>
    <name type="ordered locus">MS0251</name>
</gene>
<accession>Q65W02</accession>
<organism>
    <name type="scientific">Mannheimia succiniciproducens (strain KCTC 0769BP / MBEL55E)</name>
    <dbReference type="NCBI Taxonomy" id="221988"/>
    <lineage>
        <taxon>Bacteria</taxon>
        <taxon>Pseudomonadati</taxon>
        <taxon>Pseudomonadota</taxon>
        <taxon>Gammaproteobacteria</taxon>
        <taxon>Pasteurellales</taxon>
        <taxon>Pasteurellaceae</taxon>
        <taxon>Basfia</taxon>
    </lineage>
</organism>
<name>PYRE_MANSM</name>
<sequence length="214" mass="23750">MQNYKQEFIKFALSRNVLRFGEFTLKSGRVSPYFFNAGLFNTGADLARLGEFYASAIQASGLNYDVIFGPAYKGIPIGTTVSVALFNKFNLDKPVCFNRKEAKDHGEGGNLIGSPLQGRILLVDDVITAGTAIREAMDIIAANNARLAAVVIALNRKERGKGELSAIQEVERDYRCDVLSIIDLDDLMQFIENEPEYSQYLPAMKAYREQYGVA</sequence>
<evidence type="ECO:0000255" key="1">
    <source>
        <dbReference type="HAMAP-Rule" id="MF_01208"/>
    </source>
</evidence>
<feature type="chain" id="PRO_1000066252" description="Orotate phosphoribosyltransferase">
    <location>
        <begin position="1"/>
        <end position="214"/>
    </location>
</feature>
<feature type="binding site" description="in other chain" evidence="1">
    <location>
        <position position="26"/>
    </location>
    <ligand>
        <name>5-phospho-alpha-D-ribose 1-diphosphate</name>
        <dbReference type="ChEBI" id="CHEBI:58017"/>
        <note>ligand shared between dimeric partners</note>
    </ligand>
</feature>
<feature type="binding site" evidence="1">
    <location>
        <begin position="34"/>
        <end position="35"/>
    </location>
    <ligand>
        <name>orotate</name>
        <dbReference type="ChEBI" id="CHEBI:30839"/>
    </ligand>
</feature>
<feature type="binding site" description="in other chain" evidence="1">
    <location>
        <begin position="72"/>
        <end position="73"/>
    </location>
    <ligand>
        <name>5-phospho-alpha-D-ribose 1-diphosphate</name>
        <dbReference type="ChEBI" id="CHEBI:58017"/>
        <note>ligand shared between dimeric partners</note>
    </ligand>
</feature>
<feature type="binding site" evidence="1">
    <location>
        <position position="99"/>
    </location>
    <ligand>
        <name>5-phospho-alpha-D-ribose 1-diphosphate</name>
        <dbReference type="ChEBI" id="CHEBI:58017"/>
        <note>ligand shared between dimeric partners</note>
    </ligand>
</feature>
<feature type="binding site" description="in other chain" evidence="1">
    <location>
        <position position="100"/>
    </location>
    <ligand>
        <name>5-phospho-alpha-D-ribose 1-diphosphate</name>
        <dbReference type="ChEBI" id="CHEBI:58017"/>
        <note>ligand shared between dimeric partners</note>
    </ligand>
</feature>
<feature type="binding site" evidence="1">
    <location>
        <position position="103"/>
    </location>
    <ligand>
        <name>5-phospho-alpha-D-ribose 1-diphosphate</name>
        <dbReference type="ChEBI" id="CHEBI:58017"/>
        <note>ligand shared between dimeric partners</note>
    </ligand>
</feature>
<feature type="binding site" evidence="1">
    <location>
        <position position="105"/>
    </location>
    <ligand>
        <name>5-phospho-alpha-D-ribose 1-diphosphate</name>
        <dbReference type="ChEBI" id="CHEBI:58017"/>
        <note>ligand shared between dimeric partners</note>
    </ligand>
</feature>
<feature type="binding site" description="in other chain" evidence="1">
    <location>
        <begin position="124"/>
        <end position="132"/>
    </location>
    <ligand>
        <name>5-phospho-alpha-D-ribose 1-diphosphate</name>
        <dbReference type="ChEBI" id="CHEBI:58017"/>
        <note>ligand shared between dimeric partners</note>
    </ligand>
</feature>
<feature type="binding site" evidence="1">
    <location>
        <position position="128"/>
    </location>
    <ligand>
        <name>orotate</name>
        <dbReference type="ChEBI" id="CHEBI:30839"/>
    </ligand>
</feature>
<feature type="binding site" evidence="1">
    <location>
        <position position="156"/>
    </location>
    <ligand>
        <name>orotate</name>
        <dbReference type="ChEBI" id="CHEBI:30839"/>
    </ligand>
</feature>
<keyword id="KW-0328">Glycosyltransferase</keyword>
<keyword id="KW-0460">Magnesium</keyword>
<keyword id="KW-0665">Pyrimidine biosynthesis</keyword>
<keyword id="KW-0808">Transferase</keyword>
<dbReference type="EC" id="2.4.2.10" evidence="1"/>
<dbReference type="EMBL" id="AE016827">
    <property type="protein sequence ID" value="AAU36858.1"/>
    <property type="molecule type" value="Genomic_DNA"/>
</dbReference>
<dbReference type="RefSeq" id="WP_011199433.1">
    <property type="nucleotide sequence ID" value="NC_006300.1"/>
</dbReference>
<dbReference type="SMR" id="Q65W02"/>
<dbReference type="STRING" id="221988.MS0251"/>
<dbReference type="KEGG" id="msu:MS0251"/>
<dbReference type="eggNOG" id="COG0461">
    <property type="taxonomic scope" value="Bacteria"/>
</dbReference>
<dbReference type="HOGENOM" id="CLU_074878_0_1_6"/>
<dbReference type="OrthoDB" id="9779060at2"/>
<dbReference type="UniPathway" id="UPA00070">
    <property type="reaction ID" value="UER00119"/>
</dbReference>
<dbReference type="Proteomes" id="UP000000607">
    <property type="component" value="Chromosome"/>
</dbReference>
<dbReference type="GO" id="GO:0005737">
    <property type="term" value="C:cytoplasm"/>
    <property type="evidence" value="ECO:0007669"/>
    <property type="project" value="TreeGrafter"/>
</dbReference>
<dbReference type="GO" id="GO:0000287">
    <property type="term" value="F:magnesium ion binding"/>
    <property type="evidence" value="ECO:0007669"/>
    <property type="project" value="UniProtKB-UniRule"/>
</dbReference>
<dbReference type="GO" id="GO:0004588">
    <property type="term" value="F:orotate phosphoribosyltransferase activity"/>
    <property type="evidence" value="ECO:0007669"/>
    <property type="project" value="UniProtKB-UniRule"/>
</dbReference>
<dbReference type="GO" id="GO:0006207">
    <property type="term" value="P:'de novo' pyrimidine nucleobase biosynthetic process"/>
    <property type="evidence" value="ECO:0007669"/>
    <property type="project" value="TreeGrafter"/>
</dbReference>
<dbReference type="GO" id="GO:0044205">
    <property type="term" value="P:'de novo' UMP biosynthetic process"/>
    <property type="evidence" value="ECO:0007669"/>
    <property type="project" value="UniProtKB-UniRule"/>
</dbReference>
<dbReference type="GO" id="GO:0046132">
    <property type="term" value="P:pyrimidine ribonucleoside biosynthetic process"/>
    <property type="evidence" value="ECO:0007669"/>
    <property type="project" value="TreeGrafter"/>
</dbReference>
<dbReference type="CDD" id="cd06223">
    <property type="entry name" value="PRTases_typeI"/>
    <property type="match status" value="1"/>
</dbReference>
<dbReference type="FunFam" id="3.40.50.2020:FF:000008">
    <property type="entry name" value="Orotate phosphoribosyltransferase"/>
    <property type="match status" value="1"/>
</dbReference>
<dbReference type="Gene3D" id="3.40.50.2020">
    <property type="match status" value="1"/>
</dbReference>
<dbReference type="HAMAP" id="MF_01208">
    <property type="entry name" value="PyrE"/>
    <property type="match status" value="1"/>
</dbReference>
<dbReference type="InterPro" id="IPR023031">
    <property type="entry name" value="OPRT"/>
</dbReference>
<dbReference type="InterPro" id="IPR004467">
    <property type="entry name" value="Or_phspho_trans_dom"/>
</dbReference>
<dbReference type="InterPro" id="IPR000836">
    <property type="entry name" value="PRibTrfase_dom"/>
</dbReference>
<dbReference type="InterPro" id="IPR029057">
    <property type="entry name" value="PRTase-like"/>
</dbReference>
<dbReference type="NCBIfam" id="TIGR00336">
    <property type="entry name" value="pyrE"/>
    <property type="match status" value="1"/>
</dbReference>
<dbReference type="PANTHER" id="PTHR46683">
    <property type="entry name" value="OROTATE PHOSPHORIBOSYLTRANSFERASE 1-RELATED"/>
    <property type="match status" value="1"/>
</dbReference>
<dbReference type="PANTHER" id="PTHR46683:SF1">
    <property type="entry name" value="OROTATE PHOSPHORIBOSYLTRANSFERASE 1-RELATED"/>
    <property type="match status" value="1"/>
</dbReference>
<dbReference type="Pfam" id="PF00156">
    <property type="entry name" value="Pribosyltran"/>
    <property type="match status" value="1"/>
</dbReference>
<dbReference type="SUPFAM" id="SSF53271">
    <property type="entry name" value="PRTase-like"/>
    <property type="match status" value="1"/>
</dbReference>
<dbReference type="PROSITE" id="PS00103">
    <property type="entry name" value="PUR_PYR_PR_TRANSFER"/>
    <property type="match status" value="1"/>
</dbReference>
<protein>
    <recommendedName>
        <fullName evidence="1">Orotate phosphoribosyltransferase</fullName>
        <shortName evidence="1">OPRT</shortName>
        <shortName evidence="1">OPRTase</shortName>
        <ecNumber evidence="1">2.4.2.10</ecNumber>
    </recommendedName>
</protein>